<comment type="function">
    <text evidence="1">Snake venom phospholipase A2 (PLA2) that is not toxic by itself, but the synergistical mixture of a basic and this acidic protein is lethal. PLA2 catalyzes the calcium-dependent hydrolysis of the 2-acyl groups in 3-sn-phosphoglycerides (By similarity).</text>
</comment>
<comment type="catalytic activity">
    <reaction evidence="2 3">
        <text>a 1,2-diacyl-sn-glycero-3-phosphocholine + H2O = a 1-acyl-sn-glycero-3-phosphocholine + a fatty acid + H(+)</text>
        <dbReference type="Rhea" id="RHEA:15801"/>
        <dbReference type="ChEBI" id="CHEBI:15377"/>
        <dbReference type="ChEBI" id="CHEBI:15378"/>
        <dbReference type="ChEBI" id="CHEBI:28868"/>
        <dbReference type="ChEBI" id="CHEBI:57643"/>
        <dbReference type="ChEBI" id="CHEBI:58168"/>
        <dbReference type="EC" id="3.1.1.4"/>
    </reaction>
</comment>
<comment type="cofactor">
    <cofactor evidence="1">
        <name>Ca(2+)</name>
        <dbReference type="ChEBI" id="CHEBI:29108"/>
    </cofactor>
    <text evidence="1">Binds 1 Ca(2+) ion.</text>
</comment>
<comment type="subunit">
    <text evidence="1">Does not form a complex.</text>
</comment>
<comment type="subcellular location">
    <subcellularLocation>
        <location evidence="1">Secreted</location>
    </subcellularLocation>
</comment>
<comment type="tissue specificity">
    <text>Expressed by the venom gland.</text>
</comment>
<comment type="similarity">
    <text evidence="4">Belongs to the phospholipase A2 family. Group II subfamily. D49 sub-subfamily.</text>
</comment>
<keyword id="KW-0106">Calcium</keyword>
<keyword id="KW-1015">Disulfide bond</keyword>
<keyword id="KW-0378">Hydrolase</keyword>
<keyword id="KW-0442">Lipid degradation</keyword>
<keyword id="KW-0443">Lipid metabolism</keyword>
<keyword id="KW-0479">Metal-binding</keyword>
<keyword id="KW-0964">Secreted</keyword>
<keyword id="KW-0732">Signal</keyword>
<keyword id="KW-0800">Toxin</keyword>
<reference key="1">
    <citation type="journal article" date="1998" name="Biochem. Biophys. Res. Commun.">
        <title>Positive darwinian selection in Vipera palaestinae phospholipase A2 genes is unexpectedly limited to the third exon.</title>
        <authorList>
            <person name="Kordis D."/>
            <person name="Bdolah A."/>
            <person name="Gubensek F."/>
        </authorList>
    </citation>
    <scope>NUCLEOTIDE SEQUENCE [GENOMIC DNA]</scope>
    <source>
        <tissue>Liver</tissue>
    </source>
</reference>
<protein>
    <recommendedName>
        <fullName>Acidic phospholipase A2 VP8</fullName>
        <shortName>svPLA2</shortName>
        <ecNumber>3.1.1.4</ecNumber>
    </recommendedName>
    <alternativeName>
        <fullName>Phosphatidylcholine 2-acylhydrolase</fullName>
    </alternativeName>
</protein>
<evidence type="ECO:0000250" key="1"/>
<evidence type="ECO:0000255" key="2">
    <source>
        <dbReference type="PROSITE-ProRule" id="PRU10035"/>
    </source>
</evidence>
<evidence type="ECO:0000255" key="3">
    <source>
        <dbReference type="PROSITE-ProRule" id="PRU10036"/>
    </source>
</evidence>
<evidence type="ECO:0000305" key="4"/>
<name>PA2A8_DABPA</name>
<organism>
    <name type="scientific">Daboia palaestinae</name>
    <name type="common">Palestine viper</name>
    <name type="synonym">Vipera palaestinae</name>
    <dbReference type="NCBI Taxonomy" id="1170828"/>
    <lineage>
        <taxon>Eukaryota</taxon>
        <taxon>Metazoa</taxon>
        <taxon>Chordata</taxon>
        <taxon>Craniata</taxon>
        <taxon>Vertebrata</taxon>
        <taxon>Euteleostomi</taxon>
        <taxon>Lepidosauria</taxon>
        <taxon>Squamata</taxon>
        <taxon>Bifurcata</taxon>
        <taxon>Unidentata</taxon>
        <taxon>Episquamata</taxon>
        <taxon>Toxicofera</taxon>
        <taxon>Serpentes</taxon>
        <taxon>Colubroidea</taxon>
        <taxon>Viperidae</taxon>
        <taxon>Viperinae</taxon>
        <taxon>Daboia</taxon>
    </lineage>
</organism>
<dbReference type="EC" id="3.1.1.4"/>
<dbReference type="EMBL" id="AF091854">
    <property type="protein sequence ID" value="AAC78084.1"/>
    <property type="molecule type" value="Genomic_DNA"/>
</dbReference>
<dbReference type="SMR" id="Q9YGJ7"/>
<dbReference type="GO" id="GO:0005576">
    <property type="term" value="C:extracellular region"/>
    <property type="evidence" value="ECO:0007669"/>
    <property type="project" value="UniProtKB-SubCell"/>
</dbReference>
<dbReference type="GO" id="GO:0005509">
    <property type="term" value="F:calcium ion binding"/>
    <property type="evidence" value="ECO:0007669"/>
    <property type="project" value="InterPro"/>
</dbReference>
<dbReference type="GO" id="GO:0047498">
    <property type="term" value="F:calcium-dependent phospholipase A2 activity"/>
    <property type="evidence" value="ECO:0007669"/>
    <property type="project" value="TreeGrafter"/>
</dbReference>
<dbReference type="GO" id="GO:0005543">
    <property type="term" value="F:phospholipid binding"/>
    <property type="evidence" value="ECO:0007669"/>
    <property type="project" value="TreeGrafter"/>
</dbReference>
<dbReference type="GO" id="GO:0090729">
    <property type="term" value="F:toxin activity"/>
    <property type="evidence" value="ECO:0007669"/>
    <property type="project" value="UniProtKB-KW"/>
</dbReference>
<dbReference type="GO" id="GO:0050482">
    <property type="term" value="P:arachidonate secretion"/>
    <property type="evidence" value="ECO:0007669"/>
    <property type="project" value="InterPro"/>
</dbReference>
<dbReference type="GO" id="GO:0016042">
    <property type="term" value="P:lipid catabolic process"/>
    <property type="evidence" value="ECO:0007669"/>
    <property type="project" value="UniProtKB-KW"/>
</dbReference>
<dbReference type="GO" id="GO:0006644">
    <property type="term" value="P:phospholipid metabolic process"/>
    <property type="evidence" value="ECO:0007669"/>
    <property type="project" value="InterPro"/>
</dbReference>
<dbReference type="CDD" id="cd00125">
    <property type="entry name" value="PLA2c"/>
    <property type="match status" value="1"/>
</dbReference>
<dbReference type="FunFam" id="1.20.90.10:FF:000001">
    <property type="entry name" value="Basic phospholipase A2 homolog"/>
    <property type="match status" value="1"/>
</dbReference>
<dbReference type="Gene3D" id="1.20.90.10">
    <property type="entry name" value="Phospholipase A2 domain"/>
    <property type="match status" value="1"/>
</dbReference>
<dbReference type="InterPro" id="IPR001211">
    <property type="entry name" value="PLipase_A2"/>
</dbReference>
<dbReference type="InterPro" id="IPR033112">
    <property type="entry name" value="PLipase_A2_Asp_AS"/>
</dbReference>
<dbReference type="InterPro" id="IPR016090">
    <property type="entry name" value="PLipase_A2_dom"/>
</dbReference>
<dbReference type="InterPro" id="IPR036444">
    <property type="entry name" value="PLipase_A2_dom_sf"/>
</dbReference>
<dbReference type="InterPro" id="IPR033113">
    <property type="entry name" value="PLipase_A2_His_AS"/>
</dbReference>
<dbReference type="PANTHER" id="PTHR11716:SF101">
    <property type="entry name" value="BASIC PHOSPHOLIPASE A2 PA-11-LIKE"/>
    <property type="match status" value="1"/>
</dbReference>
<dbReference type="PANTHER" id="PTHR11716">
    <property type="entry name" value="PHOSPHOLIPASE A2 FAMILY MEMBER"/>
    <property type="match status" value="1"/>
</dbReference>
<dbReference type="Pfam" id="PF00068">
    <property type="entry name" value="Phospholip_A2_1"/>
    <property type="match status" value="1"/>
</dbReference>
<dbReference type="PRINTS" id="PR00389">
    <property type="entry name" value="PHPHLIPASEA2"/>
</dbReference>
<dbReference type="SMART" id="SM00085">
    <property type="entry name" value="PA2c"/>
    <property type="match status" value="1"/>
</dbReference>
<dbReference type="SUPFAM" id="SSF48619">
    <property type="entry name" value="Phospholipase A2, PLA2"/>
    <property type="match status" value="1"/>
</dbReference>
<dbReference type="PROSITE" id="PS00119">
    <property type="entry name" value="PA2_ASP"/>
    <property type="match status" value="1"/>
</dbReference>
<dbReference type="PROSITE" id="PS00118">
    <property type="entry name" value="PA2_HIS"/>
    <property type="match status" value="1"/>
</dbReference>
<sequence length="137" mass="15350">MRILWIVAVCLIGVEGNLYQFGKMIFKMTRKSALSYSDYGCYCGWGGKGKPQDATDRCCFVHDCCYGTVNGCDPKLSTYSYSFQNGDIVCGGDDPCLRAVCECDRVAAICFGENMNTYDTKYMLHSLFDCMEESEKC</sequence>
<feature type="signal peptide" evidence="1">
    <location>
        <begin position="1"/>
        <end position="16"/>
    </location>
</feature>
<feature type="chain" id="PRO_0000022981" description="Acidic phospholipase A2 VP8">
    <location>
        <begin position="17"/>
        <end position="137"/>
    </location>
</feature>
<feature type="active site" evidence="1">
    <location>
        <position position="62"/>
    </location>
</feature>
<feature type="active site" evidence="1">
    <location>
        <position position="104"/>
    </location>
</feature>
<feature type="binding site" evidence="1">
    <location>
        <position position="42"/>
    </location>
    <ligand>
        <name>Ca(2+)</name>
        <dbReference type="ChEBI" id="CHEBI:29108"/>
    </ligand>
</feature>
<feature type="binding site" evidence="1">
    <location>
        <position position="44"/>
    </location>
    <ligand>
        <name>Ca(2+)</name>
        <dbReference type="ChEBI" id="CHEBI:29108"/>
    </ligand>
</feature>
<feature type="binding site" evidence="1">
    <location>
        <position position="46"/>
    </location>
    <ligand>
        <name>Ca(2+)</name>
        <dbReference type="ChEBI" id="CHEBI:29108"/>
    </ligand>
</feature>
<feature type="binding site" evidence="1">
    <location>
        <position position="63"/>
    </location>
    <ligand>
        <name>Ca(2+)</name>
        <dbReference type="ChEBI" id="CHEBI:29108"/>
    </ligand>
</feature>
<feature type="disulfide bond" evidence="1">
    <location>
        <begin position="41"/>
        <end position="130"/>
    </location>
</feature>
<feature type="disulfide bond" evidence="1">
    <location>
        <begin position="43"/>
        <end position="59"/>
    </location>
</feature>
<feature type="disulfide bond" evidence="1">
    <location>
        <begin position="58"/>
        <end position="110"/>
    </location>
</feature>
<feature type="disulfide bond" evidence="1">
    <location>
        <begin position="64"/>
        <end position="137"/>
    </location>
</feature>
<feature type="disulfide bond" evidence="1">
    <location>
        <begin position="65"/>
        <end position="103"/>
    </location>
</feature>
<feature type="disulfide bond" evidence="1">
    <location>
        <begin position="72"/>
        <end position="96"/>
    </location>
</feature>
<feature type="disulfide bond" evidence="1">
    <location>
        <begin position="90"/>
        <end position="101"/>
    </location>
</feature>
<proteinExistence type="inferred from homology"/>
<accession>Q9YGJ7</accession>